<reference key="1">
    <citation type="submission" date="1998-03" db="EMBL/GenBank/DDBJ databases">
        <authorList>
            <person name="Hughes K.J."/>
            <person name="O'Reilly K.L."/>
        </authorList>
    </citation>
    <scope>NUCLEOTIDE SEQUENCE [MRNA]</scope>
</reference>
<organism>
    <name type="scientific">Felis catus</name>
    <name type="common">Cat</name>
    <name type="synonym">Felis silvestris catus</name>
    <dbReference type="NCBI Taxonomy" id="9685"/>
    <lineage>
        <taxon>Eukaryota</taxon>
        <taxon>Metazoa</taxon>
        <taxon>Chordata</taxon>
        <taxon>Craniata</taxon>
        <taxon>Vertebrata</taxon>
        <taxon>Euteleostomi</taxon>
        <taxon>Mammalia</taxon>
        <taxon>Eutheria</taxon>
        <taxon>Laurasiatheria</taxon>
        <taxon>Carnivora</taxon>
        <taxon>Feliformia</taxon>
        <taxon>Felidae</taxon>
        <taxon>Felinae</taxon>
        <taxon>Felis</taxon>
    </lineage>
</organism>
<keyword id="KW-0202">Cytokine</keyword>
<keyword id="KW-1015">Disulfide bond</keyword>
<keyword id="KW-0325">Glycoprotein</keyword>
<keyword id="KW-0339">Growth factor</keyword>
<keyword id="KW-1185">Reference proteome</keyword>
<keyword id="KW-0964">Secreted</keyword>
<keyword id="KW-0732">Signal</keyword>
<name>CSF2_FELCA</name>
<comment type="function">
    <text evidence="1">Cytokine that stimulates the growth and differentiation of hematopoietic precursor cells from various lineages, including granulocytes, macrophages, eosinophils and erythrocytes.</text>
</comment>
<comment type="subunit">
    <text evidence="1">Monomer. The signaling GM-CSF receptor complex is a dodecamer of two head-to-head hexamers of two alpha, two beta, and two ligand subunits (By similarity).</text>
</comment>
<comment type="subcellular location">
    <subcellularLocation>
        <location>Secreted</location>
    </subcellularLocation>
</comment>
<comment type="similarity">
    <text evidence="3">Belongs to the GM-CSF family.</text>
</comment>
<dbReference type="EMBL" id="AF053007">
    <property type="protein sequence ID" value="AAC06041.1"/>
    <property type="molecule type" value="mRNA"/>
</dbReference>
<dbReference type="RefSeq" id="NP_001009846.1">
    <property type="nucleotide sequence ID" value="NM_001009846.1"/>
</dbReference>
<dbReference type="SMR" id="O62757"/>
<dbReference type="FunCoup" id="O62757">
    <property type="interactions" value="61"/>
</dbReference>
<dbReference type="STRING" id="9685.ENSFCAP00000003553"/>
<dbReference type="GlyCosmos" id="O62757">
    <property type="glycosylation" value="6 sites, No reported glycans"/>
</dbReference>
<dbReference type="PaxDb" id="9685-ENSFCAP00000003553"/>
<dbReference type="GeneID" id="493805"/>
<dbReference type="CTD" id="1437"/>
<dbReference type="eggNOG" id="ENOG502TDUI">
    <property type="taxonomic scope" value="Eukaryota"/>
</dbReference>
<dbReference type="InParanoid" id="O62757"/>
<dbReference type="TreeFam" id="TF338611"/>
<dbReference type="Proteomes" id="UP000011712">
    <property type="component" value="Unplaced"/>
</dbReference>
<dbReference type="GO" id="GO:0005615">
    <property type="term" value="C:extracellular space"/>
    <property type="evidence" value="ECO:0000250"/>
    <property type="project" value="UniProtKB"/>
</dbReference>
<dbReference type="GO" id="GO:0005125">
    <property type="term" value="F:cytokine activity"/>
    <property type="evidence" value="ECO:0000250"/>
    <property type="project" value="UniProtKB"/>
</dbReference>
<dbReference type="GO" id="GO:0005129">
    <property type="term" value="F:granulocyte macrophage colony-stimulating factor receptor binding"/>
    <property type="evidence" value="ECO:0007669"/>
    <property type="project" value="InterPro"/>
</dbReference>
<dbReference type="GO" id="GO:0008083">
    <property type="term" value="F:growth factor activity"/>
    <property type="evidence" value="ECO:0007669"/>
    <property type="project" value="UniProtKB-KW"/>
</dbReference>
<dbReference type="GO" id="GO:0006955">
    <property type="term" value="P:immune response"/>
    <property type="evidence" value="ECO:0007669"/>
    <property type="project" value="InterPro"/>
</dbReference>
<dbReference type="GO" id="GO:0030099">
    <property type="term" value="P:myeloid cell differentiation"/>
    <property type="evidence" value="ECO:0000318"/>
    <property type="project" value="GO_Central"/>
</dbReference>
<dbReference type="CDD" id="cd00040">
    <property type="entry name" value="CSF2"/>
    <property type="match status" value="1"/>
</dbReference>
<dbReference type="FunFam" id="1.20.1250.10:FF:000028">
    <property type="entry name" value="Granulocyte-macrophage colony-stimulating factor"/>
    <property type="match status" value="1"/>
</dbReference>
<dbReference type="Gene3D" id="1.20.1250.10">
    <property type="match status" value="1"/>
</dbReference>
<dbReference type="InterPro" id="IPR009079">
    <property type="entry name" value="4_helix_cytokine-like_core"/>
</dbReference>
<dbReference type="InterPro" id="IPR000773">
    <property type="entry name" value="GM_colony-stim-fac"/>
</dbReference>
<dbReference type="PANTHER" id="PTHR10059:SF0">
    <property type="entry name" value="GRANULOCYTE-MACROPHAGE COLONY-STIMULATING FACTOR"/>
    <property type="match status" value="1"/>
</dbReference>
<dbReference type="PANTHER" id="PTHR10059">
    <property type="entry name" value="GRANULOCYTE-MACROPHAGE COLONY-STIMULATING FACTOR GM-CSF"/>
    <property type="match status" value="1"/>
</dbReference>
<dbReference type="Pfam" id="PF01109">
    <property type="entry name" value="GM_CSF"/>
    <property type="match status" value="1"/>
</dbReference>
<dbReference type="PRINTS" id="PR00693">
    <property type="entry name" value="GMCSFACTOR"/>
</dbReference>
<dbReference type="SMART" id="SM00040">
    <property type="entry name" value="CSF2"/>
    <property type="match status" value="1"/>
</dbReference>
<dbReference type="SUPFAM" id="SSF47266">
    <property type="entry name" value="4-helical cytokines"/>
    <property type="match status" value="1"/>
</dbReference>
<dbReference type="PROSITE" id="PS00702">
    <property type="entry name" value="GM_CSF"/>
    <property type="match status" value="1"/>
</dbReference>
<sequence>MWLQNLLFLNTVVCSISAPTSSPSSVTRPWQHVDAMKEALSLLNNSSEITAVMNETVEVVSEMFDPEEPKCLQTHLKLYEQGLRGSLISLKEPLRMMANHYKQHCPLTPETPCETQTITFKNFKEKLKDFLFNNPFDCWGPDQK</sequence>
<evidence type="ECO:0000250" key="1"/>
<evidence type="ECO:0000255" key="2"/>
<evidence type="ECO:0000305" key="3"/>
<gene>
    <name type="primary">CSF2</name>
</gene>
<proteinExistence type="evidence at transcript level"/>
<protein>
    <recommendedName>
        <fullName>Granulocyte-macrophage colony-stimulating factor</fullName>
        <shortName>GM-CSF</shortName>
    </recommendedName>
    <alternativeName>
        <fullName>Colony-stimulating factor</fullName>
        <shortName>CSF</shortName>
    </alternativeName>
</protein>
<feature type="signal peptide" evidence="1">
    <location>
        <begin position="1"/>
        <end position="17"/>
    </location>
</feature>
<feature type="chain" id="PRO_0000005864" description="Granulocyte-macrophage colony-stimulating factor">
    <location>
        <begin position="18"/>
        <end position="144"/>
    </location>
</feature>
<feature type="glycosylation site" description="O-linked (GalNAc...) serine" evidence="1">
    <location>
        <position position="22"/>
    </location>
</feature>
<feature type="glycosylation site" description="O-linked (GalNAc...) serine" evidence="1">
    <location>
        <position position="24"/>
    </location>
</feature>
<feature type="glycosylation site" description="O-linked (GalNAc...) threonine" evidence="1">
    <location>
        <position position="27"/>
    </location>
</feature>
<feature type="glycosylation site" description="N-linked (GlcNAc...) asparagine" evidence="2">
    <location>
        <position position="44"/>
    </location>
</feature>
<feature type="glycosylation site" description="N-linked (GlcNAc...) asparagine" evidence="2">
    <location>
        <position position="45"/>
    </location>
</feature>
<feature type="glycosylation site" description="N-linked (GlcNAc...) asparagine" evidence="2">
    <location>
        <position position="54"/>
    </location>
</feature>
<feature type="disulfide bond" evidence="1">
    <location>
        <begin position="71"/>
        <end position="113"/>
    </location>
</feature>
<feature type="disulfide bond" evidence="1">
    <location>
        <begin position="105"/>
        <end position="138"/>
    </location>
</feature>
<accession>O62757</accession>